<organism>
    <name type="scientific">Xanthomonas campestris pv. campestris (strain ATCC 33913 / DSM 3586 / NCPPB 528 / LMG 568 / P 25)</name>
    <dbReference type="NCBI Taxonomy" id="190485"/>
    <lineage>
        <taxon>Bacteria</taxon>
        <taxon>Pseudomonadati</taxon>
        <taxon>Pseudomonadota</taxon>
        <taxon>Gammaproteobacteria</taxon>
        <taxon>Lysobacterales</taxon>
        <taxon>Lysobacteraceae</taxon>
        <taxon>Xanthomonas</taxon>
    </lineage>
</organism>
<gene>
    <name evidence="1" type="primary">cysI</name>
    <name type="ordered locus">XCC3174</name>
</gene>
<feature type="chain" id="PRO_0000388528" description="Sulfite reductase [NADPH] hemoprotein beta-component">
    <location>
        <begin position="1"/>
        <end position="568"/>
    </location>
</feature>
<feature type="binding site" evidence="1">
    <location>
        <position position="425"/>
    </location>
    <ligand>
        <name>[4Fe-4S] cluster</name>
        <dbReference type="ChEBI" id="CHEBI:49883"/>
    </ligand>
</feature>
<feature type="binding site" evidence="1">
    <location>
        <position position="431"/>
    </location>
    <ligand>
        <name>[4Fe-4S] cluster</name>
        <dbReference type="ChEBI" id="CHEBI:49883"/>
    </ligand>
</feature>
<feature type="binding site" evidence="1">
    <location>
        <position position="470"/>
    </location>
    <ligand>
        <name>[4Fe-4S] cluster</name>
        <dbReference type="ChEBI" id="CHEBI:49883"/>
    </ligand>
</feature>
<feature type="binding site" evidence="1">
    <location>
        <position position="474"/>
    </location>
    <ligand>
        <name>[4Fe-4S] cluster</name>
        <dbReference type="ChEBI" id="CHEBI:49883"/>
    </ligand>
</feature>
<feature type="binding site" description="axial binding residue" evidence="1">
    <location>
        <position position="474"/>
    </location>
    <ligand>
        <name>siroheme</name>
        <dbReference type="ChEBI" id="CHEBI:60052"/>
    </ligand>
    <ligandPart>
        <name>Fe</name>
        <dbReference type="ChEBI" id="CHEBI:18248"/>
    </ligandPart>
</feature>
<sequence>MTHSVEDIKSTSRRLRGSLEQSLADPVTGALREDDQTLIKYHGSYQQDDRDIRDERRRQKLEPAYQFMIRTRTPGGVISPSQWLALDGIATRYANHSLRITTRQAFQFHGVIKRELKATMQAINATLIDTLAACGDVNRNVQVAANPLRSQAHATLYADAARVSEHLLPNTRAYYEIWLDEERVSGSGAEDEPIYGDRYLPRKFKIGFAAPPHNDVDVFANDLGFIAILREGQLLGYNVSIGGGMGASHGDAETWPRVANVIGFVTGDQLLDIATAVVTTQRDLGNRAVRKRARFKYTIDDHGLDTIVAEIERRAGFSLQPAQPFAFAHNGDRYGWVEGEQGDWHLTLSLPAGRIADTDTAAHLSGLRAIAQLQMGEFRMTPNQNLVIAGVPAEQRAQIDQLVAQYGLDAGNLAPTALARGAMACVALPTCGLAMAEAERYLPDFSAALQPLLERHGLAQTPIVLRLSGCPNGCSRPYLAEIALVGKAPGRYNLMLGGDRRGQRLNTLYRENINEADILAALEPLLARYAAERDRHTDEGFGDFLHRSGLIALPPYPTHRHLDLELLA</sequence>
<dbReference type="EC" id="1.8.1.2" evidence="1"/>
<dbReference type="EMBL" id="AE008922">
    <property type="protein sequence ID" value="AAM42444.1"/>
    <property type="molecule type" value="Genomic_DNA"/>
</dbReference>
<dbReference type="RefSeq" id="NP_638520.1">
    <property type="nucleotide sequence ID" value="NC_003902.1"/>
</dbReference>
<dbReference type="RefSeq" id="WP_011038281.1">
    <property type="nucleotide sequence ID" value="NC_003902.1"/>
</dbReference>
<dbReference type="SMR" id="Q8P608"/>
<dbReference type="STRING" id="190485.XCC3174"/>
<dbReference type="EnsemblBacteria" id="AAM42444">
    <property type="protein sequence ID" value="AAM42444"/>
    <property type="gene ID" value="XCC3174"/>
</dbReference>
<dbReference type="KEGG" id="xcc:XCC3174"/>
<dbReference type="PATRIC" id="fig|190485.4.peg.3390"/>
<dbReference type="eggNOG" id="COG0155">
    <property type="taxonomic scope" value="Bacteria"/>
</dbReference>
<dbReference type="HOGENOM" id="CLU_001975_3_2_6"/>
<dbReference type="OrthoDB" id="3189055at2"/>
<dbReference type="UniPathway" id="UPA00140">
    <property type="reaction ID" value="UER00207"/>
</dbReference>
<dbReference type="Proteomes" id="UP000001010">
    <property type="component" value="Chromosome"/>
</dbReference>
<dbReference type="GO" id="GO:0009337">
    <property type="term" value="C:sulfite reductase complex (NADPH)"/>
    <property type="evidence" value="ECO:0000318"/>
    <property type="project" value="GO_Central"/>
</dbReference>
<dbReference type="GO" id="GO:0051539">
    <property type="term" value="F:4 iron, 4 sulfur cluster binding"/>
    <property type="evidence" value="ECO:0007669"/>
    <property type="project" value="UniProtKB-KW"/>
</dbReference>
<dbReference type="GO" id="GO:0020037">
    <property type="term" value="F:heme binding"/>
    <property type="evidence" value="ECO:0007669"/>
    <property type="project" value="InterPro"/>
</dbReference>
<dbReference type="GO" id="GO:0046872">
    <property type="term" value="F:metal ion binding"/>
    <property type="evidence" value="ECO:0007669"/>
    <property type="project" value="UniProtKB-KW"/>
</dbReference>
<dbReference type="GO" id="GO:0050661">
    <property type="term" value="F:NADP binding"/>
    <property type="evidence" value="ECO:0007669"/>
    <property type="project" value="InterPro"/>
</dbReference>
<dbReference type="GO" id="GO:0004783">
    <property type="term" value="F:sulfite reductase (NADPH) activity"/>
    <property type="evidence" value="ECO:0007669"/>
    <property type="project" value="UniProtKB-UniRule"/>
</dbReference>
<dbReference type="GO" id="GO:0019344">
    <property type="term" value="P:cysteine biosynthetic process"/>
    <property type="evidence" value="ECO:0007669"/>
    <property type="project" value="UniProtKB-KW"/>
</dbReference>
<dbReference type="GO" id="GO:0070814">
    <property type="term" value="P:hydrogen sulfide biosynthetic process"/>
    <property type="evidence" value="ECO:0007669"/>
    <property type="project" value="UniProtKB-UniRule"/>
</dbReference>
<dbReference type="GO" id="GO:0000103">
    <property type="term" value="P:sulfate assimilation"/>
    <property type="evidence" value="ECO:0000318"/>
    <property type="project" value="GO_Central"/>
</dbReference>
<dbReference type="FunFam" id="3.30.413.10:FF:000003">
    <property type="entry name" value="Sulfite reductase [NADPH] hemoprotein beta-component"/>
    <property type="match status" value="1"/>
</dbReference>
<dbReference type="Gene3D" id="3.30.413.10">
    <property type="entry name" value="Sulfite Reductase Hemoprotein, domain 1"/>
    <property type="match status" value="2"/>
</dbReference>
<dbReference type="HAMAP" id="MF_01540">
    <property type="entry name" value="CysI"/>
    <property type="match status" value="1"/>
</dbReference>
<dbReference type="InterPro" id="IPR011786">
    <property type="entry name" value="CysI"/>
</dbReference>
<dbReference type="InterPro" id="IPR005117">
    <property type="entry name" value="NiRdtase/SiRdtase_haem-b_fer"/>
</dbReference>
<dbReference type="InterPro" id="IPR036136">
    <property type="entry name" value="Nit/Sulf_reduc_fer-like_dom_sf"/>
</dbReference>
<dbReference type="InterPro" id="IPR006067">
    <property type="entry name" value="NO2/SO3_Rdtase_4Fe4S_dom"/>
</dbReference>
<dbReference type="InterPro" id="IPR045169">
    <property type="entry name" value="NO2/SO3_Rdtase_4Fe4S_prot"/>
</dbReference>
<dbReference type="InterPro" id="IPR045854">
    <property type="entry name" value="NO2/SO3_Rdtase_4Fe4S_sf"/>
</dbReference>
<dbReference type="InterPro" id="IPR006066">
    <property type="entry name" value="NO2/SO3_Rdtase_FeS/sirohaem_BS"/>
</dbReference>
<dbReference type="NCBIfam" id="TIGR02041">
    <property type="entry name" value="CysI"/>
    <property type="match status" value="1"/>
</dbReference>
<dbReference type="NCBIfam" id="NF010029">
    <property type="entry name" value="PRK13504.1"/>
    <property type="match status" value="1"/>
</dbReference>
<dbReference type="PANTHER" id="PTHR11493:SF47">
    <property type="entry name" value="SULFITE REDUCTASE [NADPH] SUBUNIT BETA"/>
    <property type="match status" value="1"/>
</dbReference>
<dbReference type="PANTHER" id="PTHR11493">
    <property type="entry name" value="SULFITE REDUCTASE [NADPH] SUBUNIT BETA-RELATED"/>
    <property type="match status" value="1"/>
</dbReference>
<dbReference type="Pfam" id="PF01077">
    <property type="entry name" value="NIR_SIR"/>
    <property type="match status" value="1"/>
</dbReference>
<dbReference type="Pfam" id="PF03460">
    <property type="entry name" value="NIR_SIR_ferr"/>
    <property type="match status" value="2"/>
</dbReference>
<dbReference type="PRINTS" id="PR00397">
    <property type="entry name" value="SIROHAEM"/>
</dbReference>
<dbReference type="SUPFAM" id="SSF56014">
    <property type="entry name" value="Nitrite and sulphite reductase 4Fe-4S domain-like"/>
    <property type="match status" value="2"/>
</dbReference>
<dbReference type="SUPFAM" id="SSF55124">
    <property type="entry name" value="Nitrite/Sulfite reductase N-terminal domain-like"/>
    <property type="match status" value="2"/>
</dbReference>
<dbReference type="PROSITE" id="PS00365">
    <property type="entry name" value="NIR_SIR"/>
    <property type="match status" value="1"/>
</dbReference>
<comment type="function">
    <text evidence="1">Component of the sulfite reductase complex that catalyzes the 6-electron reduction of sulfite to sulfide. This is one of several activities required for the biosynthesis of L-cysteine from sulfate.</text>
</comment>
<comment type="catalytic activity">
    <reaction evidence="1">
        <text>hydrogen sulfide + 3 NADP(+) + 3 H2O = sulfite + 3 NADPH + 4 H(+)</text>
        <dbReference type="Rhea" id="RHEA:13801"/>
        <dbReference type="ChEBI" id="CHEBI:15377"/>
        <dbReference type="ChEBI" id="CHEBI:15378"/>
        <dbReference type="ChEBI" id="CHEBI:17359"/>
        <dbReference type="ChEBI" id="CHEBI:29919"/>
        <dbReference type="ChEBI" id="CHEBI:57783"/>
        <dbReference type="ChEBI" id="CHEBI:58349"/>
        <dbReference type="EC" id="1.8.1.2"/>
    </reaction>
</comment>
<comment type="cofactor">
    <cofactor evidence="1">
        <name>siroheme</name>
        <dbReference type="ChEBI" id="CHEBI:60052"/>
    </cofactor>
    <text evidence="1">Binds 1 siroheme per subunit.</text>
</comment>
<comment type="cofactor">
    <cofactor evidence="1">
        <name>[4Fe-4S] cluster</name>
        <dbReference type="ChEBI" id="CHEBI:49883"/>
    </cofactor>
    <text evidence="1">Binds 1 [4Fe-4S] cluster per subunit.</text>
</comment>
<comment type="pathway">
    <text evidence="1">Sulfur metabolism; hydrogen sulfide biosynthesis; hydrogen sulfide from sulfite (NADPH route): step 1/1.</text>
</comment>
<comment type="subunit">
    <text evidence="1">Alpha(8)-beta(8). The alpha component is a flavoprotein, the beta component is a hemoprotein.</text>
</comment>
<comment type="similarity">
    <text evidence="1">Belongs to the nitrite and sulfite reductase 4Fe-4S domain family.</text>
</comment>
<evidence type="ECO:0000255" key="1">
    <source>
        <dbReference type="HAMAP-Rule" id="MF_01540"/>
    </source>
</evidence>
<protein>
    <recommendedName>
        <fullName evidence="1">Sulfite reductase [NADPH] hemoprotein beta-component</fullName>
        <shortName evidence="1">SiR-HP</shortName>
        <shortName evidence="1">SiRHP</shortName>
        <ecNumber evidence="1">1.8.1.2</ecNumber>
    </recommendedName>
</protein>
<accession>Q8P608</accession>
<keyword id="KW-0004">4Fe-4S</keyword>
<keyword id="KW-0028">Amino-acid biosynthesis</keyword>
<keyword id="KW-0198">Cysteine biosynthesis</keyword>
<keyword id="KW-0349">Heme</keyword>
<keyword id="KW-0408">Iron</keyword>
<keyword id="KW-0411">Iron-sulfur</keyword>
<keyword id="KW-0479">Metal-binding</keyword>
<keyword id="KW-0521">NADP</keyword>
<keyword id="KW-0560">Oxidoreductase</keyword>
<keyword id="KW-1185">Reference proteome</keyword>
<proteinExistence type="inferred from homology"/>
<name>CYSI_XANCP</name>
<reference key="1">
    <citation type="journal article" date="2002" name="Nature">
        <title>Comparison of the genomes of two Xanthomonas pathogens with differing host specificities.</title>
        <authorList>
            <person name="da Silva A.C.R."/>
            <person name="Ferro J.A."/>
            <person name="Reinach F.C."/>
            <person name="Farah C.S."/>
            <person name="Furlan L.R."/>
            <person name="Quaggio R.B."/>
            <person name="Monteiro-Vitorello C.B."/>
            <person name="Van Sluys M.A."/>
            <person name="Almeida N.F. Jr."/>
            <person name="Alves L.M.C."/>
            <person name="do Amaral A.M."/>
            <person name="Bertolini M.C."/>
            <person name="Camargo L.E.A."/>
            <person name="Camarotte G."/>
            <person name="Cannavan F."/>
            <person name="Cardozo J."/>
            <person name="Chambergo F."/>
            <person name="Ciapina L.P."/>
            <person name="Cicarelli R.M.B."/>
            <person name="Coutinho L.L."/>
            <person name="Cursino-Santos J.R."/>
            <person name="El-Dorry H."/>
            <person name="Faria J.B."/>
            <person name="Ferreira A.J.S."/>
            <person name="Ferreira R.C.C."/>
            <person name="Ferro M.I.T."/>
            <person name="Formighieri E.F."/>
            <person name="Franco M.C."/>
            <person name="Greggio C.C."/>
            <person name="Gruber A."/>
            <person name="Katsuyama A.M."/>
            <person name="Kishi L.T."/>
            <person name="Leite R.P."/>
            <person name="Lemos E.G.M."/>
            <person name="Lemos M.V.F."/>
            <person name="Locali E.C."/>
            <person name="Machado M.A."/>
            <person name="Madeira A.M.B.N."/>
            <person name="Martinez-Rossi N.M."/>
            <person name="Martins E.C."/>
            <person name="Meidanis J."/>
            <person name="Menck C.F.M."/>
            <person name="Miyaki C.Y."/>
            <person name="Moon D.H."/>
            <person name="Moreira L.M."/>
            <person name="Novo M.T.M."/>
            <person name="Okura V.K."/>
            <person name="Oliveira M.C."/>
            <person name="Oliveira V.R."/>
            <person name="Pereira H.A."/>
            <person name="Rossi A."/>
            <person name="Sena J.A.D."/>
            <person name="Silva C."/>
            <person name="de Souza R.F."/>
            <person name="Spinola L.A.F."/>
            <person name="Takita M.A."/>
            <person name="Tamura R.E."/>
            <person name="Teixeira E.C."/>
            <person name="Tezza R.I.D."/>
            <person name="Trindade dos Santos M."/>
            <person name="Truffi D."/>
            <person name="Tsai S.M."/>
            <person name="White F.F."/>
            <person name="Setubal J.C."/>
            <person name="Kitajima J.P."/>
        </authorList>
    </citation>
    <scope>NUCLEOTIDE SEQUENCE [LARGE SCALE GENOMIC DNA]</scope>
    <source>
        <strain>ATCC 33913 / DSM 3586 / NCPPB 528 / LMG 568 / P 25</strain>
    </source>
</reference>